<organism>
    <name type="scientific">Teredinibacter turnerae (strain ATCC 39867 / T7901)</name>
    <dbReference type="NCBI Taxonomy" id="377629"/>
    <lineage>
        <taxon>Bacteria</taxon>
        <taxon>Pseudomonadati</taxon>
        <taxon>Pseudomonadota</taxon>
        <taxon>Gammaproteobacteria</taxon>
        <taxon>Cellvibrionales</taxon>
        <taxon>Cellvibrionaceae</taxon>
        <taxon>Teredinibacter</taxon>
    </lineage>
</organism>
<dbReference type="EC" id="3.6.5.n1" evidence="1"/>
<dbReference type="EMBL" id="CP001614">
    <property type="protein sequence ID" value="ACR13304.1"/>
    <property type="molecule type" value="Genomic_DNA"/>
</dbReference>
<dbReference type="RefSeq" id="WP_015819417.1">
    <property type="nucleotide sequence ID" value="NC_012997.1"/>
</dbReference>
<dbReference type="SMR" id="C5BRN3"/>
<dbReference type="STRING" id="377629.TERTU_1185"/>
<dbReference type="KEGG" id="ttu:TERTU_1185"/>
<dbReference type="eggNOG" id="COG0481">
    <property type="taxonomic scope" value="Bacteria"/>
</dbReference>
<dbReference type="HOGENOM" id="CLU_009995_3_3_6"/>
<dbReference type="OrthoDB" id="9801472at2"/>
<dbReference type="Proteomes" id="UP000009080">
    <property type="component" value="Chromosome"/>
</dbReference>
<dbReference type="GO" id="GO:0005886">
    <property type="term" value="C:plasma membrane"/>
    <property type="evidence" value="ECO:0007669"/>
    <property type="project" value="UniProtKB-SubCell"/>
</dbReference>
<dbReference type="GO" id="GO:0005525">
    <property type="term" value="F:GTP binding"/>
    <property type="evidence" value="ECO:0007669"/>
    <property type="project" value="UniProtKB-UniRule"/>
</dbReference>
<dbReference type="GO" id="GO:0003924">
    <property type="term" value="F:GTPase activity"/>
    <property type="evidence" value="ECO:0007669"/>
    <property type="project" value="UniProtKB-UniRule"/>
</dbReference>
<dbReference type="GO" id="GO:0097216">
    <property type="term" value="F:guanosine tetraphosphate binding"/>
    <property type="evidence" value="ECO:0007669"/>
    <property type="project" value="UniProtKB-ARBA"/>
</dbReference>
<dbReference type="GO" id="GO:0043022">
    <property type="term" value="F:ribosome binding"/>
    <property type="evidence" value="ECO:0007669"/>
    <property type="project" value="UniProtKB-UniRule"/>
</dbReference>
<dbReference type="GO" id="GO:0003746">
    <property type="term" value="F:translation elongation factor activity"/>
    <property type="evidence" value="ECO:0007669"/>
    <property type="project" value="UniProtKB-UniRule"/>
</dbReference>
<dbReference type="GO" id="GO:0045727">
    <property type="term" value="P:positive regulation of translation"/>
    <property type="evidence" value="ECO:0007669"/>
    <property type="project" value="UniProtKB-UniRule"/>
</dbReference>
<dbReference type="CDD" id="cd03699">
    <property type="entry name" value="EF4_II"/>
    <property type="match status" value="1"/>
</dbReference>
<dbReference type="CDD" id="cd16260">
    <property type="entry name" value="EF4_III"/>
    <property type="match status" value="1"/>
</dbReference>
<dbReference type="CDD" id="cd01890">
    <property type="entry name" value="LepA"/>
    <property type="match status" value="1"/>
</dbReference>
<dbReference type="CDD" id="cd03709">
    <property type="entry name" value="lepA_C"/>
    <property type="match status" value="1"/>
</dbReference>
<dbReference type="FunFam" id="3.40.50.300:FF:000078">
    <property type="entry name" value="Elongation factor 4"/>
    <property type="match status" value="1"/>
</dbReference>
<dbReference type="FunFam" id="2.40.30.10:FF:000015">
    <property type="entry name" value="Translation factor GUF1, mitochondrial"/>
    <property type="match status" value="1"/>
</dbReference>
<dbReference type="FunFam" id="3.30.70.240:FF:000007">
    <property type="entry name" value="Translation factor GUF1, mitochondrial"/>
    <property type="match status" value="1"/>
</dbReference>
<dbReference type="FunFam" id="3.30.70.2570:FF:000001">
    <property type="entry name" value="Translation factor GUF1, mitochondrial"/>
    <property type="match status" value="1"/>
</dbReference>
<dbReference type="FunFam" id="3.30.70.870:FF:000004">
    <property type="entry name" value="Translation factor GUF1, mitochondrial"/>
    <property type="match status" value="1"/>
</dbReference>
<dbReference type="Gene3D" id="3.30.70.240">
    <property type="match status" value="1"/>
</dbReference>
<dbReference type="Gene3D" id="3.30.70.2570">
    <property type="entry name" value="Elongation factor 4, C-terminal domain"/>
    <property type="match status" value="1"/>
</dbReference>
<dbReference type="Gene3D" id="3.30.70.870">
    <property type="entry name" value="Elongation Factor G (Translational Gtpase), domain 3"/>
    <property type="match status" value="1"/>
</dbReference>
<dbReference type="Gene3D" id="3.40.50.300">
    <property type="entry name" value="P-loop containing nucleotide triphosphate hydrolases"/>
    <property type="match status" value="1"/>
</dbReference>
<dbReference type="Gene3D" id="2.40.30.10">
    <property type="entry name" value="Translation factors"/>
    <property type="match status" value="1"/>
</dbReference>
<dbReference type="HAMAP" id="MF_00071">
    <property type="entry name" value="LepA"/>
    <property type="match status" value="1"/>
</dbReference>
<dbReference type="InterPro" id="IPR006297">
    <property type="entry name" value="EF-4"/>
</dbReference>
<dbReference type="InterPro" id="IPR035647">
    <property type="entry name" value="EFG_III/V"/>
</dbReference>
<dbReference type="InterPro" id="IPR000640">
    <property type="entry name" value="EFG_V-like"/>
</dbReference>
<dbReference type="InterPro" id="IPR031157">
    <property type="entry name" value="G_TR_CS"/>
</dbReference>
<dbReference type="InterPro" id="IPR038363">
    <property type="entry name" value="LepA_C_sf"/>
</dbReference>
<dbReference type="InterPro" id="IPR013842">
    <property type="entry name" value="LepA_CTD"/>
</dbReference>
<dbReference type="InterPro" id="IPR035654">
    <property type="entry name" value="LepA_IV"/>
</dbReference>
<dbReference type="InterPro" id="IPR027417">
    <property type="entry name" value="P-loop_NTPase"/>
</dbReference>
<dbReference type="InterPro" id="IPR005225">
    <property type="entry name" value="Small_GTP-bd"/>
</dbReference>
<dbReference type="InterPro" id="IPR000795">
    <property type="entry name" value="T_Tr_GTP-bd_dom"/>
</dbReference>
<dbReference type="InterPro" id="IPR009000">
    <property type="entry name" value="Transl_B-barrel_sf"/>
</dbReference>
<dbReference type="NCBIfam" id="TIGR01393">
    <property type="entry name" value="lepA"/>
    <property type="match status" value="1"/>
</dbReference>
<dbReference type="NCBIfam" id="TIGR00231">
    <property type="entry name" value="small_GTP"/>
    <property type="match status" value="1"/>
</dbReference>
<dbReference type="PANTHER" id="PTHR43512:SF4">
    <property type="entry name" value="TRANSLATION FACTOR GUF1 HOMOLOG, CHLOROPLASTIC"/>
    <property type="match status" value="1"/>
</dbReference>
<dbReference type="PANTHER" id="PTHR43512">
    <property type="entry name" value="TRANSLATION FACTOR GUF1-RELATED"/>
    <property type="match status" value="1"/>
</dbReference>
<dbReference type="Pfam" id="PF00679">
    <property type="entry name" value="EFG_C"/>
    <property type="match status" value="1"/>
</dbReference>
<dbReference type="Pfam" id="PF00009">
    <property type="entry name" value="GTP_EFTU"/>
    <property type="match status" value="1"/>
</dbReference>
<dbReference type="Pfam" id="PF06421">
    <property type="entry name" value="LepA_C"/>
    <property type="match status" value="1"/>
</dbReference>
<dbReference type="PRINTS" id="PR00315">
    <property type="entry name" value="ELONGATNFCT"/>
</dbReference>
<dbReference type="SUPFAM" id="SSF54980">
    <property type="entry name" value="EF-G C-terminal domain-like"/>
    <property type="match status" value="2"/>
</dbReference>
<dbReference type="SUPFAM" id="SSF52540">
    <property type="entry name" value="P-loop containing nucleoside triphosphate hydrolases"/>
    <property type="match status" value="1"/>
</dbReference>
<dbReference type="SUPFAM" id="SSF50447">
    <property type="entry name" value="Translation proteins"/>
    <property type="match status" value="1"/>
</dbReference>
<dbReference type="PROSITE" id="PS00301">
    <property type="entry name" value="G_TR_1"/>
    <property type="match status" value="1"/>
</dbReference>
<dbReference type="PROSITE" id="PS51722">
    <property type="entry name" value="G_TR_2"/>
    <property type="match status" value="1"/>
</dbReference>
<gene>
    <name evidence="1" type="primary">lepA</name>
    <name type="ordered locus">TERTU_1185</name>
</gene>
<protein>
    <recommendedName>
        <fullName evidence="1">Elongation factor 4</fullName>
        <shortName evidence="1">EF-4</shortName>
        <ecNumber evidence="1">3.6.5.n1</ecNumber>
    </recommendedName>
    <alternativeName>
        <fullName evidence="1">Ribosomal back-translocase LepA</fullName>
    </alternativeName>
</protein>
<accession>C5BRN3</accession>
<evidence type="ECO:0000255" key="1">
    <source>
        <dbReference type="HAMAP-Rule" id="MF_00071"/>
    </source>
</evidence>
<keyword id="KW-0997">Cell inner membrane</keyword>
<keyword id="KW-1003">Cell membrane</keyword>
<keyword id="KW-0342">GTP-binding</keyword>
<keyword id="KW-0378">Hydrolase</keyword>
<keyword id="KW-0472">Membrane</keyword>
<keyword id="KW-0547">Nucleotide-binding</keyword>
<keyword id="KW-0648">Protein biosynthesis</keyword>
<keyword id="KW-1185">Reference proteome</keyword>
<name>LEPA_TERTT</name>
<reference key="1">
    <citation type="journal article" date="2009" name="PLoS ONE">
        <title>The complete genome of Teredinibacter turnerae T7901: an intracellular endosymbiont of marine wood-boring bivalves (shipworms).</title>
        <authorList>
            <person name="Yang J.C."/>
            <person name="Madupu R."/>
            <person name="Durkin A.S."/>
            <person name="Ekborg N.A."/>
            <person name="Pedamallu C.S."/>
            <person name="Hostetler J.B."/>
            <person name="Radune D."/>
            <person name="Toms B.S."/>
            <person name="Henrissat B."/>
            <person name="Coutinho P.M."/>
            <person name="Schwarz S."/>
            <person name="Field L."/>
            <person name="Trindade-Silva A.E."/>
            <person name="Soares C.A.G."/>
            <person name="Elshahawi S."/>
            <person name="Hanora A."/>
            <person name="Schmidt E.W."/>
            <person name="Haygood M.G."/>
            <person name="Posfai J."/>
            <person name="Benner J."/>
            <person name="Madinger C."/>
            <person name="Nove J."/>
            <person name="Anton B."/>
            <person name="Chaudhary K."/>
            <person name="Foster J."/>
            <person name="Holman A."/>
            <person name="Kumar S."/>
            <person name="Lessard P.A."/>
            <person name="Luyten Y.A."/>
            <person name="Slatko B."/>
            <person name="Wood N."/>
            <person name="Wu B."/>
            <person name="Teplitski M."/>
            <person name="Mougous J.D."/>
            <person name="Ward N."/>
            <person name="Eisen J.A."/>
            <person name="Badger J.H."/>
            <person name="Distel D.L."/>
        </authorList>
    </citation>
    <scope>NUCLEOTIDE SEQUENCE [LARGE SCALE GENOMIC DNA]</scope>
    <source>
        <strain>ATCC 39867 / T7901</strain>
    </source>
</reference>
<proteinExistence type="inferred from homology"/>
<feature type="chain" id="PRO_1000202461" description="Elongation factor 4">
    <location>
        <begin position="1"/>
        <end position="599"/>
    </location>
</feature>
<feature type="domain" description="tr-type G">
    <location>
        <begin position="5"/>
        <end position="187"/>
    </location>
</feature>
<feature type="binding site" evidence="1">
    <location>
        <begin position="17"/>
        <end position="22"/>
    </location>
    <ligand>
        <name>GTP</name>
        <dbReference type="ChEBI" id="CHEBI:37565"/>
    </ligand>
</feature>
<feature type="binding site" evidence="1">
    <location>
        <begin position="134"/>
        <end position="137"/>
    </location>
    <ligand>
        <name>GTP</name>
        <dbReference type="ChEBI" id="CHEBI:37565"/>
    </ligand>
</feature>
<sequence length="599" mass="65647">MSDLSHIRNFSIIAHIDHGKSTLADRFIQHCGGLSDREMAEQVLDSMELERERGITIKAQSVTLNYQARDGKTYQLNFIDTPGHVDFSYEVSRSLAACEGALLVVDAAQGVEAQSVANCYTAIEQGLEVIPVLNKMDLPQAEPDKVAQEVEDIIGIDATEAVRCSAKSGLGIEDVLEALVNGIPAPVGDIDAPLQALIIDSWFDNYLGVVSLVRVTQGTLKTKDKIISKSIGKAHVVDMVGVFTPKRHVTGVLRAGEVGFVVAGIKEILGAPVGDTITHSNTADVKALPGFQKVKPQVYAGLFPVSSDDYESFREALAKLTLNDASLFYEPESSDALGFGFRCGFLGMLHMEIIQERLEREYDLDLITTAPTVVYEVVTSDGTTIYVDNPSKLPDVGFIDEMREPICEANILVPSDYLGAVITLCVEKRGIQKNLQYVGSQVSVSYELPMNEVVMDFFDRLKSVSRGFASLDYNFVRFEAAKLVRLDVLINSEKVDALALIVHRDNAPYKGRALADKMKELIPRQMFDVAIQAAIGGQIVARTTVKALRKNVTAKCYGGDVTRKKKLLEKQKAGKKRMKQVGRVEIPQEAFLAVLKVDS</sequence>
<comment type="function">
    <text evidence="1">Required for accurate and efficient protein synthesis under certain stress conditions. May act as a fidelity factor of the translation reaction, by catalyzing a one-codon backward translocation of tRNAs on improperly translocated ribosomes. Back-translocation proceeds from a post-translocation (POST) complex to a pre-translocation (PRE) complex, thus giving elongation factor G a second chance to translocate the tRNAs correctly. Binds to ribosomes in a GTP-dependent manner.</text>
</comment>
<comment type="catalytic activity">
    <reaction evidence="1">
        <text>GTP + H2O = GDP + phosphate + H(+)</text>
        <dbReference type="Rhea" id="RHEA:19669"/>
        <dbReference type="ChEBI" id="CHEBI:15377"/>
        <dbReference type="ChEBI" id="CHEBI:15378"/>
        <dbReference type="ChEBI" id="CHEBI:37565"/>
        <dbReference type="ChEBI" id="CHEBI:43474"/>
        <dbReference type="ChEBI" id="CHEBI:58189"/>
        <dbReference type="EC" id="3.6.5.n1"/>
    </reaction>
</comment>
<comment type="subcellular location">
    <subcellularLocation>
        <location evidence="1">Cell inner membrane</location>
        <topology evidence="1">Peripheral membrane protein</topology>
        <orientation evidence="1">Cytoplasmic side</orientation>
    </subcellularLocation>
</comment>
<comment type="similarity">
    <text evidence="1">Belongs to the TRAFAC class translation factor GTPase superfamily. Classic translation factor GTPase family. LepA subfamily.</text>
</comment>